<sequence>MLTLLHLLSAVALLVWGTHIVRTGVMRVFGARLRTVLSRSVEKKPLAFCAGIGVTALVQSSNATTMLVTSFVAQDLVALAPALVIVLGADVGTALMARILTFDLSWLSPLLIFIGVIFFLGRKQSRAGQLGRVGIGLGLILLALELIVQAVTPITQANGVQVIFASLTGDILLDALIGAMFAIISYSSLAAVLLTATLTAAGIISFPVALCLVIGANLGSGLLAMLNNSAANAAARRVALGSLLFKLVGSLIILPFVHLLAETMGKLSLPKAELVIYFHVFYNLVRCLVMLPFVDPMARFCKTIIRDEPELDTQLRPKHLDVSALDTPTLALANAARETLRIGDAMEQMMEGLNKVMHGEPRQEKELRKLADDINVLYTAIKLYLARMPKEELAEEESRRWAEIIEMSLNLEQASDIVERMGSEIADKSLAARRAFSLDGLKELDALYEQLLSNLKLAMSVFFSGDVTSARRLRRSKHRFRILNRRYSHAHVDRLHQQNVQSIETSSLHLGLLGDMQRLNSLFCSVAYSVLEQPDEDEGRDEY</sequence>
<dbReference type="EMBL" id="AE005674">
    <property type="protein sequence ID" value="AAN45511.1"/>
    <property type="molecule type" value="Genomic_DNA"/>
</dbReference>
<dbReference type="EMBL" id="AE014073">
    <property type="protein sequence ID" value="AAP18688.1"/>
    <property type="molecule type" value="Genomic_DNA"/>
</dbReference>
<dbReference type="RefSeq" id="NP_709804.1">
    <property type="nucleotide sequence ID" value="NC_004337.2"/>
</dbReference>
<dbReference type="RefSeq" id="WP_000956830.1">
    <property type="nucleotide sequence ID" value="NZ_WPGW01000087.1"/>
</dbReference>
<dbReference type="SMR" id="P0AF44"/>
<dbReference type="PaxDb" id="198214-SF4086"/>
<dbReference type="GeneID" id="1026979"/>
<dbReference type="KEGG" id="sfl:SF4086"/>
<dbReference type="KEGG" id="sfx:S3644"/>
<dbReference type="PATRIC" id="fig|198214.7.peg.4817"/>
<dbReference type="HOGENOM" id="CLU_025623_2_1_6"/>
<dbReference type="Proteomes" id="UP000001006">
    <property type="component" value="Chromosome"/>
</dbReference>
<dbReference type="Proteomes" id="UP000002673">
    <property type="component" value="Chromosome"/>
</dbReference>
<dbReference type="GO" id="GO:0005886">
    <property type="term" value="C:plasma membrane"/>
    <property type="evidence" value="ECO:0007669"/>
    <property type="project" value="UniProtKB-SubCell"/>
</dbReference>
<dbReference type="GO" id="GO:0005436">
    <property type="term" value="F:sodium:phosphate symporter activity"/>
    <property type="evidence" value="ECO:0007669"/>
    <property type="project" value="InterPro"/>
</dbReference>
<dbReference type="GO" id="GO:0044341">
    <property type="term" value="P:sodium-dependent phosphate transport"/>
    <property type="evidence" value="ECO:0007669"/>
    <property type="project" value="InterPro"/>
</dbReference>
<dbReference type="FunFam" id="1.20.58.220:FF:000003">
    <property type="entry name" value="Inorganic phosphate transporter, sodium-dependent"/>
    <property type="match status" value="1"/>
</dbReference>
<dbReference type="Gene3D" id="1.20.58.220">
    <property type="entry name" value="Phosphate transport system protein phou homolog 2, domain 2"/>
    <property type="match status" value="1"/>
</dbReference>
<dbReference type="InterPro" id="IPR003841">
    <property type="entry name" value="Na/Pi_transpt"/>
</dbReference>
<dbReference type="InterPro" id="IPR004633">
    <property type="entry name" value="NaPi_cotrn-rel/YqeW-like"/>
</dbReference>
<dbReference type="InterPro" id="IPR038078">
    <property type="entry name" value="PhoU-like_sf"/>
</dbReference>
<dbReference type="NCBIfam" id="TIGR01013">
    <property type="entry name" value="2a58"/>
    <property type="match status" value="1"/>
</dbReference>
<dbReference type="NCBIfam" id="NF037997">
    <property type="entry name" value="Na_Pi_symport"/>
    <property type="match status" value="1"/>
</dbReference>
<dbReference type="NCBIfam" id="TIGR00704">
    <property type="entry name" value="NaPi_cotrn_rel"/>
    <property type="match status" value="1"/>
</dbReference>
<dbReference type="PANTHER" id="PTHR10010:SF39">
    <property type="entry name" value="PHOU DOMAIN-CONTAINING PROTEIN"/>
    <property type="match status" value="1"/>
</dbReference>
<dbReference type="PANTHER" id="PTHR10010">
    <property type="entry name" value="SOLUTE CARRIER FAMILY 34 SODIUM PHOSPHATE , MEMBER 2-RELATED"/>
    <property type="match status" value="1"/>
</dbReference>
<dbReference type="Pfam" id="PF02690">
    <property type="entry name" value="Na_Pi_cotrans"/>
    <property type="match status" value="1"/>
</dbReference>
<dbReference type="SUPFAM" id="SSF109755">
    <property type="entry name" value="PhoU-like"/>
    <property type="match status" value="1"/>
</dbReference>
<proteinExistence type="inferred from homology"/>
<accession>P0AF44</accession>
<accession>P32683</accession>
<organism>
    <name type="scientific">Shigella flexneri</name>
    <dbReference type="NCBI Taxonomy" id="623"/>
    <lineage>
        <taxon>Bacteria</taxon>
        <taxon>Pseudomonadati</taxon>
        <taxon>Pseudomonadota</taxon>
        <taxon>Gammaproteobacteria</taxon>
        <taxon>Enterobacterales</taxon>
        <taxon>Enterobacteriaceae</taxon>
        <taxon>Shigella</taxon>
    </lineage>
</organism>
<comment type="function">
    <text evidence="1">Might be involved in phosphate export.</text>
</comment>
<comment type="catalytic activity">
    <reaction evidence="1">
        <text>phosphate(in) = phosphate(out)</text>
        <dbReference type="Rhea" id="RHEA:32823"/>
        <dbReference type="ChEBI" id="CHEBI:43474"/>
    </reaction>
</comment>
<comment type="subcellular location">
    <subcellularLocation>
        <location evidence="3">Cell inner membrane</location>
        <topology evidence="2">Multi-pass membrane protein</topology>
    </subcellularLocation>
</comment>
<comment type="similarity">
    <text evidence="3">Belongs to the YjbB family.</text>
</comment>
<reference key="1">
    <citation type="journal article" date="2002" name="Nucleic Acids Res.">
        <title>Genome sequence of Shigella flexneri 2a: insights into pathogenicity through comparison with genomes of Escherichia coli K12 and O157.</title>
        <authorList>
            <person name="Jin Q."/>
            <person name="Yuan Z."/>
            <person name="Xu J."/>
            <person name="Wang Y."/>
            <person name="Shen Y."/>
            <person name="Lu W."/>
            <person name="Wang J."/>
            <person name="Liu H."/>
            <person name="Yang J."/>
            <person name="Yang F."/>
            <person name="Zhang X."/>
            <person name="Zhang J."/>
            <person name="Yang G."/>
            <person name="Wu H."/>
            <person name="Qu D."/>
            <person name="Dong J."/>
            <person name="Sun L."/>
            <person name="Xue Y."/>
            <person name="Zhao A."/>
            <person name="Gao Y."/>
            <person name="Zhu J."/>
            <person name="Kan B."/>
            <person name="Ding K."/>
            <person name="Chen S."/>
            <person name="Cheng H."/>
            <person name="Yao Z."/>
            <person name="He B."/>
            <person name="Chen R."/>
            <person name="Ma D."/>
            <person name="Qiang B."/>
            <person name="Wen Y."/>
            <person name="Hou Y."/>
            <person name="Yu J."/>
        </authorList>
    </citation>
    <scope>NUCLEOTIDE SEQUENCE [LARGE SCALE GENOMIC DNA]</scope>
    <source>
        <strain>301 / Serotype 2a</strain>
    </source>
</reference>
<reference key="2">
    <citation type="journal article" date="2003" name="Infect. Immun.">
        <title>Complete genome sequence and comparative genomics of Shigella flexneri serotype 2a strain 2457T.</title>
        <authorList>
            <person name="Wei J."/>
            <person name="Goldberg M.B."/>
            <person name="Burland V."/>
            <person name="Venkatesan M.M."/>
            <person name="Deng W."/>
            <person name="Fournier G."/>
            <person name="Mayhew G.F."/>
            <person name="Plunkett G. III"/>
            <person name="Rose D.J."/>
            <person name="Darling A."/>
            <person name="Mau B."/>
            <person name="Perna N.T."/>
            <person name="Payne S.M."/>
            <person name="Runyen-Janecky L.J."/>
            <person name="Zhou S."/>
            <person name="Schwartz D.C."/>
            <person name="Blattner F.R."/>
        </authorList>
    </citation>
    <scope>NUCLEOTIDE SEQUENCE [LARGE SCALE GENOMIC DNA]</scope>
    <source>
        <strain>ATCC 700930 / 2457T / Serotype 2a</strain>
    </source>
</reference>
<keyword id="KW-0997">Cell inner membrane</keyword>
<keyword id="KW-1003">Cell membrane</keyword>
<keyword id="KW-0472">Membrane</keyword>
<keyword id="KW-0592">Phosphate transport</keyword>
<keyword id="KW-1185">Reference proteome</keyword>
<keyword id="KW-0812">Transmembrane</keyword>
<keyword id="KW-1133">Transmembrane helix</keyword>
<keyword id="KW-0813">Transport</keyword>
<evidence type="ECO:0000250" key="1">
    <source>
        <dbReference type="UniProtKB" id="P0AF43"/>
    </source>
</evidence>
<evidence type="ECO:0000255" key="2"/>
<evidence type="ECO:0000305" key="3"/>
<protein>
    <recommendedName>
        <fullName evidence="1">Putative inorganic phosphate export protein YjbB</fullName>
    </recommendedName>
</protein>
<name>YJBB_SHIFL</name>
<gene>
    <name type="primary">yjbB</name>
    <name type="ordered locus">SF4086</name>
    <name type="ordered locus">S3644</name>
</gene>
<feature type="chain" id="PRO_0000169709" description="Putative inorganic phosphate export protein YjbB">
    <location>
        <begin position="1"/>
        <end position="543"/>
    </location>
</feature>
<feature type="transmembrane region" description="Helical" evidence="2">
    <location>
        <begin position="1"/>
        <end position="21"/>
    </location>
</feature>
<feature type="transmembrane region" description="Helical" evidence="2">
    <location>
        <begin position="48"/>
        <end position="68"/>
    </location>
</feature>
<feature type="transmembrane region" description="Helical" evidence="2">
    <location>
        <begin position="76"/>
        <end position="96"/>
    </location>
</feature>
<feature type="transmembrane region" description="Helical" evidence="2">
    <location>
        <begin position="99"/>
        <end position="119"/>
    </location>
</feature>
<feature type="transmembrane region" description="Helical" evidence="2">
    <location>
        <begin position="134"/>
        <end position="154"/>
    </location>
</feature>
<feature type="transmembrane region" description="Helical" evidence="2">
    <location>
        <begin position="175"/>
        <end position="195"/>
    </location>
</feature>
<feature type="transmembrane region" description="Helical" evidence="2">
    <location>
        <begin position="196"/>
        <end position="216"/>
    </location>
</feature>
<feature type="transmembrane region" description="Helical" evidence="2">
    <location>
        <begin position="240"/>
        <end position="260"/>
    </location>
</feature>
<feature type="transmembrane region" description="Helical" evidence="2">
    <location>
        <begin position="274"/>
        <end position="294"/>
    </location>
</feature>